<evidence type="ECO:0000255" key="1">
    <source>
        <dbReference type="HAMAP-Rule" id="MF_01848"/>
    </source>
</evidence>
<evidence type="ECO:0000256" key="2">
    <source>
        <dbReference type="SAM" id="MobiDB-lite"/>
    </source>
</evidence>
<feature type="chain" id="PRO_0000349958" description="Ribosomal RNA large subunit methyltransferase F">
    <location>
        <begin position="1"/>
        <end position="365"/>
    </location>
</feature>
<feature type="region of interest" description="Disordered" evidence="2">
    <location>
        <begin position="1"/>
        <end position="50"/>
    </location>
</feature>
<feature type="compositionally biased region" description="Low complexity" evidence="2">
    <location>
        <begin position="1"/>
        <end position="18"/>
    </location>
</feature>
<feature type="compositionally biased region" description="Low complexity" evidence="2">
    <location>
        <begin position="30"/>
        <end position="42"/>
    </location>
</feature>
<proteinExistence type="inferred from homology"/>
<sequence>MPKPAIKTAAKPATSPAGKRAKPNTPQSVAKLKASTAKAASKPKAKLGEKKTLHPRNVHLHGYDFVALMASFPKLKAFVRPTAYGALSIDFADPLAVKNLNAALLKQHYQIDFWDIPKGALCPPIPGRVDYVHYLADLLFEGATAPRVEQVCALDIGTGANGIYAILGQQVYGWQFVASDINPQSLANVQRIIDNNSCLQGHVTLRRQRDENAIFKGIIEAADRFELTLCNPPFHASLREASEGSQRKVRNLQLSRGEKPKATGASLNFGGQAAELWCQGGEKQFLATMIRESHMFAEQCLWFTSLVSKQENLKPCYQALAKLGVDTVKTIEMQQGNKVTRVLAWSFHSQAKRLRWRSELVTPTE</sequence>
<reference key="1">
    <citation type="journal article" date="2002" name="Nat. Biotechnol.">
        <title>Genome sequence of the dissimilatory metal ion-reducing bacterium Shewanella oneidensis.</title>
        <authorList>
            <person name="Heidelberg J.F."/>
            <person name="Paulsen I.T."/>
            <person name="Nelson K.E."/>
            <person name="Gaidos E.J."/>
            <person name="Nelson W.C."/>
            <person name="Read T.D."/>
            <person name="Eisen J.A."/>
            <person name="Seshadri R."/>
            <person name="Ward N.L."/>
            <person name="Methe B.A."/>
            <person name="Clayton R.A."/>
            <person name="Meyer T."/>
            <person name="Tsapin A."/>
            <person name="Scott J."/>
            <person name="Beanan M.J."/>
            <person name="Brinkac L.M."/>
            <person name="Daugherty S.C."/>
            <person name="DeBoy R.T."/>
            <person name="Dodson R.J."/>
            <person name="Durkin A.S."/>
            <person name="Haft D.H."/>
            <person name="Kolonay J.F."/>
            <person name="Madupu R."/>
            <person name="Peterson J.D."/>
            <person name="Umayam L.A."/>
            <person name="White O."/>
            <person name="Wolf A.M."/>
            <person name="Vamathevan J.J."/>
            <person name="Weidman J.F."/>
            <person name="Impraim M."/>
            <person name="Lee K."/>
            <person name="Berry K.J."/>
            <person name="Lee C."/>
            <person name="Mueller J."/>
            <person name="Khouri H.M."/>
            <person name="Gill J."/>
            <person name="Utterback T.R."/>
            <person name="McDonald L.A."/>
            <person name="Feldblyum T.V."/>
            <person name="Smith H.O."/>
            <person name="Venter J.C."/>
            <person name="Nealson K.H."/>
            <person name="Fraser C.M."/>
        </authorList>
    </citation>
    <scope>NUCLEOTIDE SEQUENCE [LARGE SCALE GENOMIC DNA]</scope>
    <source>
        <strain>ATCC 700550 / JCM 31522 / CIP 106686 / LMG 19005 / NCIMB 14063 / MR-1</strain>
    </source>
</reference>
<comment type="function">
    <text evidence="1">Specifically methylates the adenine in position 1618 of 23S rRNA.</text>
</comment>
<comment type="catalytic activity">
    <reaction evidence="1">
        <text>adenosine(1618) in 23S rRNA + S-adenosyl-L-methionine = N(6)-methyladenosine(1618) in 23S rRNA + S-adenosyl-L-homocysteine + H(+)</text>
        <dbReference type="Rhea" id="RHEA:16497"/>
        <dbReference type="Rhea" id="RHEA-COMP:10229"/>
        <dbReference type="Rhea" id="RHEA-COMP:10231"/>
        <dbReference type="ChEBI" id="CHEBI:15378"/>
        <dbReference type="ChEBI" id="CHEBI:57856"/>
        <dbReference type="ChEBI" id="CHEBI:59789"/>
        <dbReference type="ChEBI" id="CHEBI:74411"/>
        <dbReference type="ChEBI" id="CHEBI:74449"/>
        <dbReference type="EC" id="2.1.1.181"/>
    </reaction>
</comment>
<comment type="subcellular location">
    <subcellularLocation>
        <location evidence="1">Cytoplasm</location>
    </subcellularLocation>
</comment>
<comment type="similarity">
    <text evidence="1">Belongs to the methyltransferase superfamily. METTL16/RlmF family.</text>
</comment>
<dbReference type="EC" id="2.1.1.181" evidence="1"/>
<dbReference type="EMBL" id="AE014299">
    <property type="protein sequence ID" value="AAN53221.2"/>
    <property type="molecule type" value="Genomic_DNA"/>
</dbReference>
<dbReference type="RefSeq" id="NP_715776.3">
    <property type="nucleotide sequence ID" value="NC_004347.2"/>
</dbReference>
<dbReference type="RefSeq" id="WP_011070538.1">
    <property type="nucleotide sequence ID" value="NC_004347.2"/>
</dbReference>
<dbReference type="SMR" id="Q8EKF9"/>
<dbReference type="STRING" id="211586.SO_0134"/>
<dbReference type="PaxDb" id="211586-SO_0134"/>
<dbReference type="KEGG" id="son:SO_0134"/>
<dbReference type="PATRIC" id="fig|211586.12.peg.129"/>
<dbReference type="eggNOG" id="COG3129">
    <property type="taxonomic scope" value="Bacteria"/>
</dbReference>
<dbReference type="HOGENOM" id="CLU_027534_3_0_6"/>
<dbReference type="OrthoDB" id="1115728at2"/>
<dbReference type="PhylomeDB" id="Q8EKF9"/>
<dbReference type="BioCyc" id="SONE211586:G1GMP-128-MONOMER"/>
<dbReference type="Proteomes" id="UP000008186">
    <property type="component" value="Chromosome"/>
</dbReference>
<dbReference type="GO" id="GO:0005737">
    <property type="term" value="C:cytoplasm"/>
    <property type="evidence" value="ECO:0007669"/>
    <property type="project" value="UniProtKB-SubCell"/>
</dbReference>
<dbReference type="GO" id="GO:0052907">
    <property type="term" value="F:23S rRNA (adenine(1618)-N(6))-methyltransferase activity"/>
    <property type="evidence" value="ECO:0000318"/>
    <property type="project" value="GO_Central"/>
</dbReference>
<dbReference type="GO" id="GO:0070475">
    <property type="term" value="P:rRNA base methylation"/>
    <property type="evidence" value="ECO:0000318"/>
    <property type="project" value="GO_Central"/>
</dbReference>
<dbReference type="CDD" id="cd02440">
    <property type="entry name" value="AdoMet_MTases"/>
    <property type="match status" value="1"/>
</dbReference>
<dbReference type="Gene3D" id="3.40.50.150">
    <property type="entry name" value="Vaccinia Virus protein VP39"/>
    <property type="match status" value="1"/>
</dbReference>
<dbReference type="HAMAP" id="MF_01848">
    <property type="entry name" value="23SrRNA_methyltr_F"/>
    <property type="match status" value="1"/>
</dbReference>
<dbReference type="InterPro" id="IPR010286">
    <property type="entry name" value="METTL16/RlmF"/>
</dbReference>
<dbReference type="InterPro" id="IPR016909">
    <property type="entry name" value="rRNA_lsu_MeTfrase_F"/>
</dbReference>
<dbReference type="InterPro" id="IPR029063">
    <property type="entry name" value="SAM-dependent_MTases_sf"/>
</dbReference>
<dbReference type="NCBIfam" id="NF008725">
    <property type="entry name" value="PRK11727.1"/>
    <property type="match status" value="1"/>
</dbReference>
<dbReference type="PANTHER" id="PTHR13393:SF0">
    <property type="entry name" value="RNA N6-ADENOSINE-METHYLTRANSFERASE METTL16"/>
    <property type="match status" value="1"/>
</dbReference>
<dbReference type="PANTHER" id="PTHR13393">
    <property type="entry name" value="SAM-DEPENDENT METHYLTRANSFERASE"/>
    <property type="match status" value="1"/>
</dbReference>
<dbReference type="Pfam" id="PF05971">
    <property type="entry name" value="Methyltransf_10"/>
    <property type="match status" value="1"/>
</dbReference>
<dbReference type="PIRSF" id="PIRSF029038">
    <property type="entry name" value="Mtase_YbiN_prd"/>
    <property type="match status" value="1"/>
</dbReference>
<dbReference type="SUPFAM" id="SSF53335">
    <property type="entry name" value="S-adenosyl-L-methionine-dependent methyltransferases"/>
    <property type="match status" value="1"/>
</dbReference>
<gene>
    <name evidence="1" type="primary">rlmF</name>
    <name type="ordered locus">SO_0134</name>
</gene>
<protein>
    <recommendedName>
        <fullName evidence="1">Ribosomal RNA large subunit methyltransferase F</fullName>
        <ecNumber evidence="1">2.1.1.181</ecNumber>
    </recommendedName>
    <alternativeName>
        <fullName evidence="1">23S rRNA mA1618 methyltransferase</fullName>
    </alternativeName>
    <alternativeName>
        <fullName evidence="1">rRNA adenine N-6-methyltransferase</fullName>
    </alternativeName>
</protein>
<accession>Q8EKF9</accession>
<organism>
    <name type="scientific">Shewanella oneidensis (strain ATCC 700550 / JCM 31522 / CIP 106686 / LMG 19005 / NCIMB 14063 / MR-1)</name>
    <dbReference type="NCBI Taxonomy" id="211586"/>
    <lineage>
        <taxon>Bacteria</taxon>
        <taxon>Pseudomonadati</taxon>
        <taxon>Pseudomonadota</taxon>
        <taxon>Gammaproteobacteria</taxon>
        <taxon>Alteromonadales</taxon>
        <taxon>Shewanellaceae</taxon>
        <taxon>Shewanella</taxon>
    </lineage>
</organism>
<keyword id="KW-0963">Cytoplasm</keyword>
<keyword id="KW-0489">Methyltransferase</keyword>
<keyword id="KW-1185">Reference proteome</keyword>
<keyword id="KW-0698">rRNA processing</keyword>
<keyword id="KW-0949">S-adenosyl-L-methionine</keyword>
<keyword id="KW-0808">Transferase</keyword>
<name>RLMF_SHEON</name>